<keyword id="KW-0067">ATP-binding</keyword>
<keyword id="KW-0963">Cytoplasm</keyword>
<keyword id="KW-0436">Ligase</keyword>
<keyword id="KW-0547">Nucleotide-binding</keyword>
<keyword id="KW-0694">RNA-binding</keyword>
<keyword id="KW-0819">tRNA processing</keyword>
<keyword id="KW-0820">tRNA-binding</keyword>
<organism>
    <name type="scientific">Streptococcus pneumoniae (strain Taiwan19F-14)</name>
    <dbReference type="NCBI Taxonomy" id="487213"/>
    <lineage>
        <taxon>Bacteria</taxon>
        <taxon>Bacillati</taxon>
        <taxon>Bacillota</taxon>
        <taxon>Bacilli</taxon>
        <taxon>Lactobacillales</taxon>
        <taxon>Streptococcaceae</taxon>
        <taxon>Streptococcus</taxon>
    </lineage>
</organism>
<protein>
    <recommendedName>
        <fullName evidence="1">tRNA(Met) cytidine acetate ligase</fullName>
        <ecNumber evidence="1">6.3.4.-</ecNumber>
    </recommendedName>
</protein>
<reference key="1">
    <citation type="journal article" date="2010" name="Genome Biol.">
        <title>Structure and dynamics of the pan-genome of Streptococcus pneumoniae and closely related species.</title>
        <authorList>
            <person name="Donati C."/>
            <person name="Hiller N.L."/>
            <person name="Tettelin H."/>
            <person name="Muzzi A."/>
            <person name="Croucher N.J."/>
            <person name="Angiuoli S.V."/>
            <person name="Oggioni M."/>
            <person name="Dunning Hotopp J.C."/>
            <person name="Hu F.Z."/>
            <person name="Riley D.R."/>
            <person name="Covacci A."/>
            <person name="Mitchell T.J."/>
            <person name="Bentley S.D."/>
            <person name="Kilian M."/>
            <person name="Ehrlich G.D."/>
            <person name="Rappuoli R."/>
            <person name="Moxon E.R."/>
            <person name="Masignani V."/>
        </authorList>
    </citation>
    <scope>NUCLEOTIDE SEQUENCE [LARGE SCALE GENOMIC DNA]</scope>
    <source>
        <strain>Taiwan19F-14</strain>
    </source>
</reference>
<dbReference type="EC" id="6.3.4.-" evidence="1"/>
<dbReference type="EMBL" id="CP000921">
    <property type="protein sequence ID" value="ACO23933.1"/>
    <property type="molecule type" value="Genomic_DNA"/>
</dbReference>
<dbReference type="RefSeq" id="WP_000156347.1">
    <property type="nucleotide sequence ID" value="NC_012469.1"/>
</dbReference>
<dbReference type="SMR" id="C1CT01"/>
<dbReference type="KEGG" id="snt:SPT_1680"/>
<dbReference type="HOGENOM" id="CLU_038915_0_2_9"/>
<dbReference type="GO" id="GO:0005737">
    <property type="term" value="C:cytoplasm"/>
    <property type="evidence" value="ECO:0007669"/>
    <property type="project" value="UniProtKB-SubCell"/>
</dbReference>
<dbReference type="GO" id="GO:0005524">
    <property type="term" value="F:ATP binding"/>
    <property type="evidence" value="ECO:0007669"/>
    <property type="project" value="UniProtKB-KW"/>
</dbReference>
<dbReference type="GO" id="GO:0016879">
    <property type="term" value="F:ligase activity, forming carbon-nitrogen bonds"/>
    <property type="evidence" value="ECO:0007669"/>
    <property type="project" value="UniProtKB-UniRule"/>
</dbReference>
<dbReference type="GO" id="GO:0000049">
    <property type="term" value="F:tRNA binding"/>
    <property type="evidence" value="ECO:0007669"/>
    <property type="project" value="UniProtKB-KW"/>
</dbReference>
<dbReference type="GO" id="GO:0006400">
    <property type="term" value="P:tRNA modification"/>
    <property type="evidence" value="ECO:0007669"/>
    <property type="project" value="UniProtKB-UniRule"/>
</dbReference>
<dbReference type="Gene3D" id="3.40.50.620">
    <property type="entry name" value="HUPs"/>
    <property type="match status" value="1"/>
</dbReference>
<dbReference type="HAMAP" id="MF_01539">
    <property type="entry name" value="TmcAL"/>
    <property type="match status" value="1"/>
</dbReference>
<dbReference type="InterPro" id="IPR014729">
    <property type="entry name" value="Rossmann-like_a/b/a_fold"/>
</dbReference>
<dbReference type="InterPro" id="IPR008513">
    <property type="entry name" value="tRNA(Met)_cyd_acetate_ligase"/>
</dbReference>
<dbReference type="NCBIfam" id="NF010191">
    <property type="entry name" value="PRK13670.1"/>
    <property type="match status" value="1"/>
</dbReference>
<dbReference type="PANTHER" id="PTHR37825">
    <property type="entry name" value="TRNA(MET) CYTIDINE ACETATE LIGASE"/>
    <property type="match status" value="1"/>
</dbReference>
<dbReference type="PANTHER" id="PTHR37825:SF1">
    <property type="entry name" value="TRNA(MET) CYTIDINE ACETATE LIGASE"/>
    <property type="match status" value="1"/>
</dbReference>
<dbReference type="Pfam" id="PF05636">
    <property type="entry name" value="HIGH_NTase1"/>
    <property type="match status" value="1"/>
</dbReference>
<dbReference type="SUPFAM" id="SSF52374">
    <property type="entry name" value="Nucleotidylyl transferase"/>
    <property type="match status" value="1"/>
</dbReference>
<name>TMCAL_STRZT</name>
<evidence type="ECO:0000255" key="1">
    <source>
        <dbReference type="HAMAP-Rule" id="MF_01539"/>
    </source>
</evidence>
<proteinExistence type="inferred from homology"/>
<accession>C1CT01</accession>
<comment type="function">
    <text evidence="1">Catalyzes the formation of N(4)-acetylcytidine (ac(4)C) at the wobble position of elongator tRNA(Met), using acetate and ATP as substrates. First activates an acetate ion to form acetyladenylate (Ac-AMP) and then transfers the acetyl group to tRNA to form ac(4)C34.</text>
</comment>
<comment type="catalytic activity">
    <reaction evidence="1">
        <text>cytidine(34) in elongator tRNA(Met) + acetate + ATP = N(4)-acetylcytidine(34) in elongator tRNA(Met) + AMP + diphosphate</text>
        <dbReference type="Rhea" id="RHEA:58144"/>
        <dbReference type="Rhea" id="RHEA-COMP:10693"/>
        <dbReference type="Rhea" id="RHEA-COMP:10694"/>
        <dbReference type="ChEBI" id="CHEBI:30089"/>
        <dbReference type="ChEBI" id="CHEBI:30616"/>
        <dbReference type="ChEBI" id="CHEBI:33019"/>
        <dbReference type="ChEBI" id="CHEBI:74900"/>
        <dbReference type="ChEBI" id="CHEBI:82748"/>
        <dbReference type="ChEBI" id="CHEBI:456215"/>
    </reaction>
</comment>
<comment type="subcellular location">
    <subcellularLocation>
        <location evidence="1">Cytoplasm</location>
    </subcellularLocation>
</comment>
<comment type="similarity">
    <text evidence="1">Belongs to the TmcAL family.</text>
</comment>
<feature type="chain" id="PRO_1000185227" description="tRNA(Met) cytidine acetate ligase">
    <location>
        <begin position="1"/>
        <end position="365"/>
    </location>
</feature>
<feature type="binding site" evidence="1">
    <location>
        <begin position="7"/>
        <end position="20"/>
    </location>
    <ligand>
        <name>ATP</name>
        <dbReference type="ChEBI" id="CHEBI:30616"/>
    </ligand>
</feature>
<feature type="binding site" evidence="1">
    <location>
        <position position="96"/>
    </location>
    <ligand>
        <name>ATP</name>
        <dbReference type="ChEBI" id="CHEBI:30616"/>
    </ligand>
</feature>
<feature type="binding site" evidence="1">
    <location>
        <position position="152"/>
    </location>
    <ligand>
        <name>ATP</name>
        <dbReference type="ChEBI" id="CHEBI:30616"/>
    </ligand>
</feature>
<feature type="binding site" evidence="1">
    <location>
        <position position="175"/>
    </location>
    <ligand>
        <name>ATP</name>
        <dbReference type="ChEBI" id="CHEBI:30616"/>
    </ligand>
</feature>
<gene>
    <name evidence="1" type="primary">tmcAL</name>
    <name type="ordered locus">SPT_1680</name>
</gene>
<sequence>MTITGIIAEFNPFHNGHKYLLDQAEGLKIVAMSGNFMQRGEPAIVDKWTRAQMALENGADLVVELPFLVSVQAADFFGQGAVDILDRLGIDSLVFGTEEVRDYQKIADLYTEKGTEMEKFVENLPDSLSYPQKTQAMWKEFAGLDFSGNTPNHVLALAYAKAVAGRNIKLHPIQRQGAGYHSVNKDVDFASATALRQHQKDQDFLERFMPSVALFEQASKVIWEDYFPLLRYQILSNPDLTTIYQVNQEMAVRIKEAIKTAQSVEELVELVTTKRYTKARVRRLLTYILMQARENVLPEAIHVLGFTEKGRQHLKSLKGQVSLVSRIGKEPWDAMTQKADQIYQLGKPSIAEQNFGRVPIRIETN</sequence>